<protein>
    <recommendedName>
        <fullName>Pre-mRNA-splicing factor sap62</fullName>
    </recommendedName>
    <alternativeName>
        <fullName>Spliceosome-associated protein 62</fullName>
    </alternativeName>
</protein>
<comment type="function">
    <text>Involved in mRNA splicing where it associates with cdc5 and the other cwf proteins as part of the spliceosome.</text>
</comment>
<comment type="subunit">
    <text evidence="2">Belongs to the 40S cdc5-associated complex (or cwf complex), a spliceosome sub-complex reminiscent of a late-stage spliceosome composed of the U2, U5 and U6 snRNAs and at least brr2, cdc5, cwf2/prp3, cwf3/syf1, cwf4/syf3, cwf5/ecm2, spp42/cwf6, cwf7/spf27, cwf8, cwf9, cwf10, cwf11, cwf12, prp45/cwf13, cwf14, cwf15, cwf16, cwf17, cwf18, cwf19, cwf20, cwf21, cwf22, cwf23, cwf24, cwf25, cwf26, cyp7/cwf27, cwf28, cwf29/ist3, lea1, msl1, prp5/cwf1, prp10, prp12/sap130, prp17, prp22, sap61, sap62, sap114, sap145, slu7, smb1, smd1, smd3, smf1, smg1 and syf2.</text>
</comment>
<comment type="subcellular location">
    <subcellularLocation>
        <location evidence="5">Nucleus</location>
    </subcellularLocation>
    <subcellularLocation>
        <location evidence="3">Cytoplasm</location>
    </subcellularLocation>
</comment>
<comment type="similarity">
    <text evidence="4">Belongs to the SF3A2 family.</text>
</comment>
<gene>
    <name type="primary">sap62</name>
    <name type="ORF">SPBC21C3.05</name>
</gene>
<reference key="1">
    <citation type="journal article" date="2002" name="Nature">
        <title>The genome sequence of Schizosaccharomyces pombe.</title>
        <authorList>
            <person name="Wood V."/>
            <person name="Gwilliam R."/>
            <person name="Rajandream M.A."/>
            <person name="Lyne M.H."/>
            <person name="Lyne R."/>
            <person name="Stewart A."/>
            <person name="Sgouros J.G."/>
            <person name="Peat N."/>
            <person name="Hayles J."/>
            <person name="Baker S.G."/>
            <person name="Basham D."/>
            <person name="Bowman S."/>
            <person name="Brooks K."/>
            <person name="Brown D."/>
            <person name="Brown S."/>
            <person name="Chillingworth T."/>
            <person name="Churcher C.M."/>
            <person name="Collins M."/>
            <person name="Connor R."/>
            <person name="Cronin A."/>
            <person name="Davis P."/>
            <person name="Feltwell T."/>
            <person name="Fraser A."/>
            <person name="Gentles S."/>
            <person name="Goble A."/>
            <person name="Hamlin N."/>
            <person name="Harris D.E."/>
            <person name="Hidalgo J."/>
            <person name="Hodgson G."/>
            <person name="Holroyd S."/>
            <person name="Hornsby T."/>
            <person name="Howarth S."/>
            <person name="Huckle E.J."/>
            <person name="Hunt S."/>
            <person name="Jagels K."/>
            <person name="James K.D."/>
            <person name="Jones L."/>
            <person name="Jones M."/>
            <person name="Leather S."/>
            <person name="McDonald S."/>
            <person name="McLean J."/>
            <person name="Mooney P."/>
            <person name="Moule S."/>
            <person name="Mungall K.L."/>
            <person name="Murphy L.D."/>
            <person name="Niblett D."/>
            <person name="Odell C."/>
            <person name="Oliver K."/>
            <person name="O'Neil S."/>
            <person name="Pearson D."/>
            <person name="Quail M.A."/>
            <person name="Rabbinowitsch E."/>
            <person name="Rutherford K.M."/>
            <person name="Rutter S."/>
            <person name="Saunders D."/>
            <person name="Seeger K."/>
            <person name="Sharp S."/>
            <person name="Skelton J."/>
            <person name="Simmonds M.N."/>
            <person name="Squares R."/>
            <person name="Squares S."/>
            <person name="Stevens K."/>
            <person name="Taylor K."/>
            <person name="Taylor R.G."/>
            <person name="Tivey A."/>
            <person name="Walsh S.V."/>
            <person name="Warren T."/>
            <person name="Whitehead S."/>
            <person name="Woodward J.R."/>
            <person name="Volckaert G."/>
            <person name="Aert R."/>
            <person name="Robben J."/>
            <person name="Grymonprez B."/>
            <person name="Weltjens I."/>
            <person name="Vanstreels E."/>
            <person name="Rieger M."/>
            <person name="Schaefer M."/>
            <person name="Mueller-Auer S."/>
            <person name="Gabel C."/>
            <person name="Fuchs M."/>
            <person name="Duesterhoeft A."/>
            <person name="Fritzc C."/>
            <person name="Holzer E."/>
            <person name="Moestl D."/>
            <person name="Hilbert H."/>
            <person name="Borzym K."/>
            <person name="Langer I."/>
            <person name="Beck A."/>
            <person name="Lehrach H."/>
            <person name="Reinhardt R."/>
            <person name="Pohl T.M."/>
            <person name="Eger P."/>
            <person name="Zimmermann W."/>
            <person name="Wedler H."/>
            <person name="Wambutt R."/>
            <person name="Purnelle B."/>
            <person name="Goffeau A."/>
            <person name="Cadieu E."/>
            <person name="Dreano S."/>
            <person name="Gloux S."/>
            <person name="Lelaure V."/>
            <person name="Mottier S."/>
            <person name="Galibert F."/>
            <person name="Aves S.J."/>
            <person name="Xiang Z."/>
            <person name="Hunt C."/>
            <person name="Moore K."/>
            <person name="Hurst S.M."/>
            <person name="Lucas M."/>
            <person name="Rochet M."/>
            <person name="Gaillardin C."/>
            <person name="Tallada V.A."/>
            <person name="Garzon A."/>
            <person name="Thode G."/>
            <person name="Daga R.R."/>
            <person name="Cruzado L."/>
            <person name="Jimenez J."/>
            <person name="Sanchez M."/>
            <person name="del Rey F."/>
            <person name="Benito J."/>
            <person name="Dominguez A."/>
            <person name="Revuelta J.L."/>
            <person name="Moreno S."/>
            <person name="Armstrong J."/>
            <person name="Forsburg S.L."/>
            <person name="Cerutti L."/>
            <person name="Lowe T."/>
            <person name="McCombie W.R."/>
            <person name="Paulsen I."/>
            <person name="Potashkin J."/>
            <person name="Shpakovski G.V."/>
            <person name="Ussery D."/>
            <person name="Barrell B.G."/>
            <person name="Nurse P."/>
        </authorList>
    </citation>
    <scope>NUCLEOTIDE SEQUENCE [LARGE SCALE GENOMIC DNA]</scope>
    <source>
        <strain>972 / ATCC 24843</strain>
    </source>
</reference>
<reference key="2">
    <citation type="journal article" date="2002" name="Mol. Cell. Biol.">
        <title>Proteomics analysis reveals stable multiprotein complexes in both fission and budding yeasts containing Myb-related Cdc5p/Cef1p, novel pre-mRNA splicing factors, and snRNAs.</title>
        <authorList>
            <person name="Ohi M.D."/>
            <person name="Link A.J."/>
            <person name="Ren L."/>
            <person name="Jennings J.L."/>
            <person name="McDonald W.H."/>
            <person name="Gould K.L."/>
        </authorList>
    </citation>
    <scope>IDENTIFICATION IN THE CWF COMPLEX</scope>
    <scope>IDENTIFICATION BY MASS SPECTROMETRY</scope>
</reference>
<reference key="3">
    <citation type="journal article" date="2006" name="Nat. Biotechnol.">
        <title>ORFeome cloning and global analysis of protein localization in the fission yeast Schizosaccharomyces pombe.</title>
        <authorList>
            <person name="Matsuyama A."/>
            <person name="Arai R."/>
            <person name="Yashiroda Y."/>
            <person name="Shirai A."/>
            <person name="Kamata A."/>
            <person name="Sekido S."/>
            <person name="Kobayashi Y."/>
            <person name="Hashimoto A."/>
            <person name="Hamamoto M."/>
            <person name="Hiraoka Y."/>
            <person name="Horinouchi S."/>
            <person name="Yoshida M."/>
        </authorList>
    </citation>
    <scope>SUBCELLULAR LOCATION [LARGE SCALE ANALYSIS]</scope>
</reference>
<feature type="chain" id="PRO_0000353820" description="Pre-mRNA-splicing factor sap62">
    <location>
        <begin position="1"/>
        <end position="217"/>
    </location>
</feature>
<feature type="zinc finger region" description="Matrin-type" evidence="1">
    <location>
        <begin position="54"/>
        <end position="84"/>
    </location>
</feature>
<keyword id="KW-0963">Cytoplasm</keyword>
<keyword id="KW-0479">Metal-binding</keyword>
<keyword id="KW-0507">mRNA processing</keyword>
<keyword id="KW-0508">mRNA splicing</keyword>
<keyword id="KW-0539">Nucleus</keyword>
<keyword id="KW-1185">Reference proteome</keyword>
<keyword id="KW-0747">Spliceosome</keyword>
<keyword id="KW-0862">Zinc</keyword>
<keyword id="KW-0863">Zinc-finger</keyword>
<dbReference type="EMBL" id="CU329671">
    <property type="protein sequence ID" value="CAB76041.1"/>
    <property type="molecule type" value="Genomic_DNA"/>
</dbReference>
<dbReference type="PIR" id="T50349">
    <property type="entry name" value="T50349"/>
</dbReference>
<dbReference type="RefSeq" id="NP_596585.1">
    <property type="nucleotide sequence ID" value="NM_001022505.2"/>
</dbReference>
<dbReference type="SMR" id="Q9P7L8"/>
<dbReference type="BioGRID" id="277148">
    <property type="interactions" value="23"/>
</dbReference>
<dbReference type="FunCoup" id="Q9P7L8">
    <property type="interactions" value="170"/>
</dbReference>
<dbReference type="IntAct" id="Q9P7L8">
    <property type="interactions" value="1"/>
</dbReference>
<dbReference type="STRING" id="284812.Q9P7L8"/>
<dbReference type="PaxDb" id="4896-SPBC21C3.05.1"/>
<dbReference type="EnsemblFungi" id="SPBC21C3.05.1">
    <property type="protein sequence ID" value="SPBC21C3.05.1:pep"/>
    <property type="gene ID" value="SPBC21C3.05"/>
</dbReference>
<dbReference type="GeneID" id="2540622"/>
<dbReference type="KEGG" id="spo:2540622"/>
<dbReference type="PomBase" id="SPBC21C3.05">
    <property type="gene designation" value="sap62"/>
</dbReference>
<dbReference type="VEuPathDB" id="FungiDB:SPBC21C3.05"/>
<dbReference type="eggNOG" id="KOG0227">
    <property type="taxonomic scope" value="Eukaryota"/>
</dbReference>
<dbReference type="HOGENOM" id="CLU_050757_1_0_1"/>
<dbReference type="InParanoid" id="Q9P7L8"/>
<dbReference type="OMA" id="EFWIQIM"/>
<dbReference type="PhylomeDB" id="Q9P7L8"/>
<dbReference type="PRO" id="PR:Q9P7L8"/>
<dbReference type="Proteomes" id="UP000002485">
    <property type="component" value="Chromosome II"/>
</dbReference>
<dbReference type="GO" id="GO:0071013">
    <property type="term" value="C:catalytic step 2 spliceosome"/>
    <property type="evidence" value="ECO:0000318"/>
    <property type="project" value="GO_Central"/>
</dbReference>
<dbReference type="GO" id="GO:0005829">
    <property type="term" value="C:cytosol"/>
    <property type="evidence" value="ECO:0007005"/>
    <property type="project" value="PomBase"/>
</dbReference>
<dbReference type="GO" id="GO:0005634">
    <property type="term" value="C:nucleus"/>
    <property type="evidence" value="ECO:0007005"/>
    <property type="project" value="PomBase"/>
</dbReference>
<dbReference type="GO" id="GO:0005686">
    <property type="term" value="C:U2 snRNP"/>
    <property type="evidence" value="ECO:0000314"/>
    <property type="project" value="PomBase"/>
</dbReference>
<dbReference type="GO" id="GO:0071004">
    <property type="term" value="C:U2-type prespliceosome"/>
    <property type="evidence" value="ECO:0000318"/>
    <property type="project" value="GO_Central"/>
</dbReference>
<dbReference type="GO" id="GO:0003723">
    <property type="term" value="F:RNA binding"/>
    <property type="evidence" value="ECO:0000250"/>
    <property type="project" value="PomBase"/>
</dbReference>
<dbReference type="GO" id="GO:0008270">
    <property type="term" value="F:zinc ion binding"/>
    <property type="evidence" value="ECO:0007669"/>
    <property type="project" value="UniProtKB-KW"/>
</dbReference>
<dbReference type="GO" id="GO:0045292">
    <property type="term" value="P:mRNA cis splicing, via spliceosome"/>
    <property type="evidence" value="ECO:0000269"/>
    <property type="project" value="PomBase"/>
</dbReference>
<dbReference type="GO" id="GO:0000245">
    <property type="term" value="P:spliceosomal complex assembly"/>
    <property type="evidence" value="ECO:0000318"/>
    <property type="project" value="GO_Central"/>
</dbReference>
<dbReference type="GO" id="GO:1903241">
    <property type="term" value="P:U2-type prespliceosome assembly"/>
    <property type="evidence" value="ECO:0000250"/>
    <property type="project" value="PomBase"/>
</dbReference>
<dbReference type="Gene3D" id="2.60.40.2690">
    <property type="match status" value="1"/>
</dbReference>
<dbReference type="InterPro" id="IPR000690">
    <property type="entry name" value="Matrin/U1-C_Znf_C2H2"/>
</dbReference>
<dbReference type="InterPro" id="IPR003604">
    <property type="entry name" value="Matrin/U1-like-C_Znf_C2H2"/>
</dbReference>
<dbReference type="InterPro" id="IPR052092">
    <property type="entry name" value="SF3A2"/>
</dbReference>
<dbReference type="InterPro" id="IPR031781">
    <property type="entry name" value="SF3A2_dom"/>
</dbReference>
<dbReference type="InterPro" id="IPR036236">
    <property type="entry name" value="Znf_C2H2_sf"/>
</dbReference>
<dbReference type="InterPro" id="IPR013087">
    <property type="entry name" value="Znf_C2H2_type"/>
</dbReference>
<dbReference type="PANTHER" id="PTHR23205">
    <property type="entry name" value="SPLICING FACTOR 3A SUBUNIT 2"/>
    <property type="match status" value="1"/>
</dbReference>
<dbReference type="PANTHER" id="PTHR23205:SF0">
    <property type="entry name" value="SPLICING FACTOR 3A SUBUNIT 2"/>
    <property type="match status" value="1"/>
</dbReference>
<dbReference type="Pfam" id="PF16835">
    <property type="entry name" value="SF3A2"/>
    <property type="match status" value="1"/>
</dbReference>
<dbReference type="Pfam" id="PF12874">
    <property type="entry name" value="zf-met"/>
    <property type="match status" value="1"/>
</dbReference>
<dbReference type="SMART" id="SM01050">
    <property type="entry name" value="CactinC_cactus"/>
    <property type="match status" value="1"/>
</dbReference>
<dbReference type="SMART" id="SM00451">
    <property type="entry name" value="ZnF_U1"/>
    <property type="match status" value="1"/>
</dbReference>
<dbReference type="SUPFAM" id="SSF57667">
    <property type="entry name" value="beta-beta-alpha zinc fingers"/>
    <property type="match status" value="1"/>
</dbReference>
<dbReference type="PROSITE" id="PS50171">
    <property type="entry name" value="ZF_MATRIN"/>
    <property type="match status" value="1"/>
</dbReference>
<accession>Q9P7L8</accession>
<proteinExistence type="evidence at protein level"/>
<name>SAP62_SCHPO</name>
<organism>
    <name type="scientific">Schizosaccharomyces pombe (strain 972 / ATCC 24843)</name>
    <name type="common">Fission yeast</name>
    <dbReference type="NCBI Taxonomy" id="284812"/>
    <lineage>
        <taxon>Eukaryota</taxon>
        <taxon>Fungi</taxon>
        <taxon>Dikarya</taxon>
        <taxon>Ascomycota</taxon>
        <taxon>Taphrinomycotina</taxon>
        <taxon>Schizosaccharomycetes</taxon>
        <taxon>Schizosaccharomycetales</taxon>
        <taxon>Schizosaccharomycetaceae</taxon>
        <taxon>Schizosaccharomyces</taxon>
    </lineage>
</organism>
<sequence length="217" mass="24987">MDYQNRAGVRFGGGGVAGYQETNAARRERLRKLALETIDLSKDPYLMKNHLGTFECRLCLTTHANENSYLTHTQGKKHQTNLARRQALENKKSQENAPQVLLGISQSHVQVKKSVVKIGRPGYKVSKIREAESGKFGLRFQIKYPDIEVNAKPRYRIMSAYEQRVEAPDRKFQYLVVAAEPYESIAFKIDRAPGKFWSYWDAPTYTIQFFYNLTKIS</sequence>
<evidence type="ECO:0000255" key="1">
    <source>
        <dbReference type="PROSITE-ProRule" id="PRU00130"/>
    </source>
</evidence>
<evidence type="ECO:0000269" key="2">
    <source>
    </source>
</evidence>
<evidence type="ECO:0000269" key="3">
    <source>
    </source>
</evidence>
<evidence type="ECO:0000305" key="4"/>
<evidence type="ECO:0000305" key="5">
    <source>
    </source>
</evidence>